<keyword id="KW-0004">4Fe-4S</keyword>
<keyword id="KW-0013">ADP-ribosylation</keyword>
<keyword id="KW-0067">ATP-binding</keyword>
<keyword id="KW-0408">Iron</keyword>
<keyword id="KW-0411">Iron-sulfur</keyword>
<keyword id="KW-0479">Metal-binding</keyword>
<keyword id="KW-0535">Nitrogen fixation</keyword>
<keyword id="KW-0547">Nucleotide-binding</keyword>
<keyword id="KW-0560">Oxidoreductase</keyword>
<proteinExistence type="inferred from homology"/>
<sequence>MGKLRQIAFYGKGGIGKSTTSQNTLAALVEMGQKILIVGCDPKADSTRLILNTKLQDTVLHLAAEAGSVEDLELEDVVKIGYKGIKCTEAGGPEPGVGCAGRGVITAINFLEENGAYDDVDYVSYDVLGDVVCGGFAMPIRENKAQEIYIVMSGEMMALYAANNIAKGILKYANSGGVRLGGLICNERKTDRELELAEALAARLGCKMIHFVPRDNIVQHAELRRETVIQYAPESKQAQEYRELARKIHENSGKGVIPTPITMEELEEMLMDFGIMQSEEDRLAAIAAAEA</sequence>
<accession>O31183</accession>
<organism>
    <name type="scientific">Cereibacter sphaeroides</name>
    <name type="common">Rhodobacter sphaeroides</name>
    <dbReference type="NCBI Taxonomy" id="1063"/>
    <lineage>
        <taxon>Bacteria</taxon>
        <taxon>Pseudomonadati</taxon>
        <taxon>Pseudomonadota</taxon>
        <taxon>Alphaproteobacteria</taxon>
        <taxon>Rhodobacterales</taxon>
        <taxon>Paracoccaceae</taxon>
        <taxon>Cereibacter</taxon>
    </lineage>
</organism>
<reference key="1">
    <citation type="submission" date="1997-10" db="EMBL/GenBank/DDBJ databases">
        <title>Transcription of the nifHDK genes is derepressed in the presence of ammonia by a Rubisco double deletion mutant.</title>
        <authorList>
            <person name="Qian Y."/>
            <person name="Tabita F.R."/>
        </authorList>
    </citation>
    <scope>NUCLEOTIDE SEQUENCE [GENOMIC DNA]</scope>
    <source>
        <strain>16PHC</strain>
    </source>
</reference>
<feature type="chain" id="PRO_0000139530" description="Nitrogenase iron protein">
    <location>
        <begin position="1"/>
        <end position="291"/>
    </location>
</feature>
<feature type="binding site" evidence="2">
    <location>
        <begin position="11"/>
        <end position="18"/>
    </location>
    <ligand>
        <name>ATP</name>
        <dbReference type="ChEBI" id="CHEBI:30616"/>
    </ligand>
</feature>
<feature type="binding site" evidence="1">
    <location>
        <position position="99"/>
    </location>
    <ligand>
        <name>[4Fe-4S] cluster</name>
        <dbReference type="ChEBI" id="CHEBI:49883"/>
        <note>ligand shared between dimeric partners</note>
    </ligand>
</feature>
<feature type="binding site" evidence="1">
    <location>
        <position position="133"/>
    </location>
    <ligand>
        <name>[4Fe-4S] cluster</name>
        <dbReference type="ChEBI" id="CHEBI:49883"/>
        <note>ligand shared between dimeric partners</note>
    </ligand>
</feature>
<feature type="modified residue" description="ADP-ribosylarginine; by dinitrogenase reductase ADP-ribosyltransferase" evidence="1">
    <location>
        <position position="102"/>
    </location>
</feature>
<gene>
    <name type="primary">nifH</name>
</gene>
<comment type="function">
    <text evidence="1">The key enzymatic reactions in nitrogen fixation are catalyzed by the nitrogenase complex, which has 2 components: the iron protein and the molybdenum-iron protein.</text>
</comment>
<comment type="catalytic activity">
    <reaction>
        <text>N2 + 8 reduced [2Fe-2S]-[ferredoxin] + 16 ATP + 16 H2O = H2 + 8 oxidized [2Fe-2S]-[ferredoxin] + 2 NH4(+) + 16 ADP + 16 phosphate + 6 H(+)</text>
        <dbReference type="Rhea" id="RHEA:21448"/>
        <dbReference type="Rhea" id="RHEA-COMP:10000"/>
        <dbReference type="Rhea" id="RHEA-COMP:10001"/>
        <dbReference type="ChEBI" id="CHEBI:15377"/>
        <dbReference type="ChEBI" id="CHEBI:15378"/>
        <dbReference type="ChEBI" id="CHEBI:17997"/>
        <dbReference type="ChEBI" id="CHEBI:18276"/>
        <dbReference type="ChEBI" id="CHEBI:28938"/>
        <dbReference type="ChEBI" id="CHEBI:30616"/>
        <dbReference type="ChEBI" id="CHEBI:33737"/>
        <dbReference type="ChEBI" id="CHEBI:33738"/>
        <dbReference type="ChEBI" id="CHEBI:43474"/>
        <dbReference type="ChEBI" id="CHEBI:456216"/>
        <dbReference type="EC" id="1.18.6.1"/>
    </reaction>
</comment>
<comment type="cofactor">
    <cofactor evidence="1">
        <name>[4Fe-4S] cluster</name>
        <dbReference type="ChEBI" id="CHEBI:49883"/>
    </cofactor>
    <text evidence="1">Binds 1 [4Fe-4S] cluster per dimer.</text>
</comment>
<comment type="subunit">
    <text evidence="1">Homodimer.</text>
</comment>
<comment type="PTM">
    <text evidence="1">The reversible ADP-ribosylation of Arg-102 inactivates the nitrogenase reductase and regulates nitrogenase activity.</text>
</comment>
<comment type="similarity">
    <text evidence="3">Belongs to the NifH/BchL/ChlL family.</text>
</comment>
<protein>
    <recommendedName>
        <fullName>Nitrogenase iron protein</fullName>
        <ecNumber>1.18.6.1</ecNumber>
    </recommendedName>
    <alternativeName>
        <fullName>Nitrogenase Fe protein</fullName>
    </alternativeName>
    <alternativeName>
        <fullName>Nitrogenase component II</fullName>
    </alternativeName>
    <alternativeName>
        <fullName>Nitrogenase reductase</fullName>
    </alternativeName>
</protein>
<dbReference type="EC" id="1.18.6.1"/>
<dbReference type="EMBL" id="AF031817">
    <property type="protein sequence ID" value="AAB86864.1"/>
    <property type="molecule type" value="Genomic_DNA"/>
</dbReference>
<dbReference type="RefSeq" id="WP_002720705.1">
    <property type="nucleotide sequence ID" value="NZ_WTFI01000012.1"/>
</dbReference>
<dbReference type="SMR" id="O31183"/>
<dbReference type="GeneID" id="67447273"/>
<dbReference type="GO" id="GO:0051539">
    <property type="term" value="F:4 iron, 4 sulfur cluster binding"/>
    <property type="evidence" value="ECO:0007669"/>
    <property type="project" value="UniProtKB-KW"/>
</dbReference>
<dbReference type="GO" id="GO:0005524">
    <property type="term" value="F:ATP binding"/>
    <property type="evidence" value="ECO:0007669"/>
    <property type="project" value="UniProtKB-UniRule"/>
</dbReference>
<dbReference type="GO" id="GO:0046872">
    <property type="term" value="F:metal ion binding"/>
    <property type="evidence" value="ECO:0007669"/>
    <property type="project" value="UniProtKB-KW"/>
</dbReference>
<dbReference type="GO" id="GO:0016163">
    <property type="term" value="F:nitrogenase activity"/>
    <property type="evidence" value="ECO:0007669"/>
    <property type="project" value="UniProtKB-UniRule"/>
</dbReference>
<dbReference type="GO" id="GO:0009399">
    <property type="term" value="P:nitrogen fixation"/>
    <property type="evidence" value="ECO:0007669"/>
    <property type="project" value="UniProtKB-UniRule"/>
</dbReference>
<dbReference type="CDD" id="cd02040">
    <property type="entry name" value="NifH"/>
    <property type="match status" value="1"/>
</dbReference>
<dbReference type="FunFam" id="3.40.50.300:FF:001379">
    <property type="entry name" value="Nitrogenase iron protein 1"/>
    <property type="match status" value="1"/>
</dbReference>
<dbReference type="Gene3D" id="3.40.50.300">
    <property type="entry name" value="P-loop containing nucleotide triphosphate hydrolases"/>
    <property type="match status" value="1"/>
</dbReference>
<dbReference type="HAMAP" id="MF_00533">
    <property type="entry name" value="NifH"/>
    <property type="match status" value="1"/>
</dbReference>
<dbReference type="InterPro" id="IPR030655">
    <property type="entry name" value="NifH/chlL_CS"/>
</dbReference>
<dbReference type="InterPro" id="IPR000392">
    <property type="entry name" value="NifH/frxC"/>
</dbReference>
<dbReference type="InterPro" id="IPR005977">
    <property type="entry name" value="Nitrogenase_Fe_NifH"/>
</dbReference>
<dbReference type="InterPro" id="IPR027417">
    <property type="entry name" value="P-loop_NTPase"/>
</dbReference>
<dbReference type="NCBIfam" id="TIGR01287">
    <property type="entry name" value="nifH"/>
    <property type="match status" value="1"/>
</dbReference>
<dbReference type="PANTHER" id="PTHR42864">
    <property type="entry name" value="LIGHT-INDEPENDENT PROTOCHLOROPHYLLIDE REDUCTASE IRON-SULFUR ATP-BINDING PROTEIN"/>
    <property type="match status" value="1"/>
</dbReference>
<dbReference type="PANTHER" id="PTHR42864:SF2">
    <property type="entry name" value="LIGHT-INDEPENDENT PROTOCHLOROPHYLLIDE REDUCTASE IRON-SULFUR ATP-BINDING PROTEIN"/>
    <property type="match status" value="1"/>
</dbReference>
<dbReference type="Pfam" id="PF00142">
    <property type="entry name" value="Fer4_NifH"/>
    <property type="match status" value="1"/>
</dbReference>
<dbReference type="PIRSF" id="PIRSF000363">
    <property type="entry name" value="Nitrogenase_iron"/>
    <property type="match status" value="1"/>
</dbReference>
<dbReference type="PRINTS" id="PR00091">
    <property type="entry name" value="NITROGNASEII"/>
</dbReference>
<dbReference type="SUPFAM" id="SSF52540">
    <property type="entry name" value="P-loop containing nucleoside triphosphate hydrolases"/>
    <property type="match status" value="1"/>
</dbReference>
<dbReference type="PROSITE" id="PS00746">
    <property type="entry name" value="NIFH_FRXC_1"/>
    <property type="match status" value="1"/>
</dbReference>
<dbReference type="PROSITE" id="PS00692">
    <property type="entry name" value="NIFH_FRXC_2"/>
    <property type="match status" value="1"/>
</dbReference>
<dbReference type="PROSITE" id="PS51026">
    <property type="entry name" value="NIFH_FRXC_3"/>
    <property type="match status" value="1"/>
</dbReference>
<evidence type="ECO:0000250" key="1"/>
<evidence type="ECO:0000255" key="2"/>
<evidence type="ECO:0000305" key="3"/>
<name>NIFH_CERSP</name>